<organism>
    <name type="scientific">Aspergillus flavus (strain ATCC 200026 / FGSC A1120 / IAM 13836 / NRRL 3357 / JCM 12722 / SRRC 167)</name>
    <dbReference type="NCBI Taxonomy" id="332952"/>
    <lineage>
        <taxon>Eukaryota</taxon>
        <taxon>Fungi</taxon>
        <taxon>Dikarya</taxon>
        <taxon>Ascomycota</taxon>
        <taxon>Pezizomycotina</taxon>
        <taxon>Eurotiomycetes</taxon>
        <taxon>Eurotiomycetidae</taxon>
        <taxon>Eurotiales</taxon>
        <taxon>Aspergillaceae</taxon>
        <taxon>Aspergillus</taxon>
        <taxon>Aspergillus subgen. Circumdati</taxon>
    </lineage>
</organism>
<proteinExistence type="inferred from homology"/>
<name>RHGC_ASPFN</name>
<evidence type="ECO:0000250" key="1"/>
<evidence type="ECO:0000255" key="2"/>
<evidence type="ECO:0000305" key="3"/>
<gene>
    <name type="primary">rhgC</name>
    <name type="ORF">AFLA_136750</name>
</gene>
<keyword id="KW-0119">Carbohydrate metabolism</keyword>
<keyword id="KW-0961">Cell wall biogenesis/degradation</keyword>
<keyword id="KW-1015">Disulfide bond</keyword>
<keyword id="KW-0325">Glycoprotein</keyword>
<keyword id="KW-0326">Glycosidase</keyword>
<keyword id="KW-0378">Hydrolase</keyword>
<keyword id="KW-0624">Polysaccharide degradation</keyword>
<keyword id="KW-0964">Secreted</keyword>
<keyword id="KW-0732">Signal</keyword>
<accession>B8NGP8</accession>
<protein>
    <recommendedName>
        <fullName>Probable rhamnogalacturonase C</fullName>
        <shortName>RGase C</shortName>
        <shortName>RHG C</shortName>
        <ecNumber>3.2.1.-</ecNumber>
    </recommendedName>
</protein>
<feature type="signal peptide" evidence="2">
    <location>
        <begin position="1"/>
        <end position="19"/>
    </location>
</feature>
<feature type="chain" id="PRO_0000394953" description="Probable rhamnogalacturonase C">
    <location>
        <begin position="20"/>
        <end position="447"/>
    </location>
</feature>
<feature type="active site" description="Proton donor" evidence="1">
    <location>
        <position position="217"/>
    </location>
</feature>
<feature type="active site" evidence="1">
    <location>
        <position position="291"/>
    </location>
</feature>
<feature type="glycosylation site" description="N-linked (GlcNAc...) asparagine" evidence="2">
    <location>
        <position position="37"/>
    </location>
</feature>
<feature type="glycosylation site" description="N-linked (GlcNAc...) asparagine" evidence="2">
    <location>
        <position position="65"/>
    </location>
</feature>
<feature type="glycosylation site" description="N-linked (GlcNAc...) asparagine" evidence="2">
    <location>
        <position position="237"/>
    </location>
</feature>
<feature type="glycosylation site" description="N-linked (GlcNAc...) asparagine" evidence="2">
    <location>
        <position position="252"/>
    </location>
</feature>
<feature type="glycosylation site" description="N-linked (GlcNAc...) asparagine" evidence="2">
    <location>
        <position position="316"/>
    </location>
</feature>
<feature type="disulfide bond" evidence="1">
    <location>
        <begin position="40"/>
        <end position="66"/>
    </location>
</feature>
<feature type="disulfide bond" evidence="1">
    <location>
        <begin position="219"/>
        <end position="236"/>
    </location>
</feature>
<feature type="disulfide bond" evidence="1">
    <location>
        <begin position="338"/>
        <end position="344"/>
    </location>
</feature>
<feature type="disulfide bond" evidence="1">
    <location>
        <begin position="366"/>
        <end position="375"/>
    </location>
</feature>
<comment type="function">
    <text evidence="1">Pectinolytic enzymes consist of four classes of enzymes: pectine lyase, polygalacturonase, pectin methylesterase and rhamnogalacturonase. Hydrolyzes alpha-D-galacturonopyranosyl-(1,2)-alpha-L-rhamnopyranosyl linkages in the backbone of the hairy regions of pectins (By similarity).</text>
</comment>
<comment type="subcellular location">
    <subcellularLocation>
        <location evidence="1">Secreted</location>
    </subcellularLocation>
</comment>
<comment type="similarity">
    <text evidence="3">Belongs to the glycosyl hydrolase 28 family.</text>
</comment>
<comment type="sequence caution" evidence="3">
    <conflict type="erroneous initiation">
        <sequence resource="EMBL-CDS" id="EED50912"/>
    </conflict>
    <text>Extended N-terminus.</text>
</comment>
<dbReference type="EC" id="3.2.1.-"/>
<dbReference type="EMBL" id="EQ963478">
    <property type="protein sequence ID" value="EED50912.1"/>
    <property type="status" value="ALT_INIT"/>
    <property type="molecule type" value="Genomic_DNA"/>
</dbReference>
<dbReference type="RefSeq" id="XP_002379688.1">
    <property type="nucleotide sequence ID" value="XM_002379647.1"/>
</dbReference>
<dbReference type="SMR" id="B8NGP8"/>
<dbReference type="STRING" id="332952.B8NGP8"/>
<dbReference type="GlyCosmos" id="B8NGP8">
    <property type="glycosylation" value="5 sites, No reported glycans"/>
</dbReference>
<dbReference type="EnsemblFungi" id="EED50912">
    <property type="protein sequence ID" value="EED50912"/>
    <property type="gene ID" value="AFLA_136750"/>
</dbReference>
<dbReference type="VEuPathDB" id="FungiDB:AFLA_006044"/>
<dbReference type="eggNOG" id="ENOG502QU5S">
    <property type="taxonomic scope" value="Eukaryota"/>
</dbReference>
<dbReference type="GO" id="GO:0005576">
    <property type="term" value="C:extracellular region"/>
    <property type="evidence" value="ECO:0007669"/>
    <property type="project" value="UniProtKB-SubCell"/>
</dbReference>
<dbReference type="GO" id="GO:0004650">
    <property type="term" value="F:polygalacturonase activity"/>
    <property type="evidence" value="ECO:0007669"/>
    <property type="project" value="InterPro"/>
</dbReference>
<dbReference type="GO" id="GO:0046576">
    <property type="term" value="F:rhamnogalacturonan alpha-L-rhamnopyranosyl-(1-&gt;4)-alpha-D-galactopyranosyluronide lyase activity"/>
    <property type="evidence" value="ECO:0007669"/>
    <property type="project" value="UniProtKB-ARBA"/>
</dbReference>
<dbReference type="GO" id="GO:0071555">
    <property type="term" value="P:cell wall organization"/>
    <property type="evidence" value="ECO:0007669"/>
    <property type="project" value="UniProtKB-KW"/>
</dbReference>
<dbReference type="GO" id="GO:0000272">
    <property type="term" value="P:polysaccharide catabolic process"/>
    <property type="evidence" value="ECO:0007669"/>
    <property type="project" value="UniProtKB-KW"/>
</dbReference>
<dbReference type="Gene3D" id="2.160.20.10">
    <property type="entry name" value="Single-stranded right-handed beta-helix, Pectin lyase-like"/>
    <property type="match status" value="1"/>
</dbReference>
<dbReference type="InterPro" id="IPR000743">
    <property type="entry name" value="Glyco_hydro_28"/>
</dbReference>
<dbReference type="InterPro" id="IPR012334">
    <property type="entry name" value="Pectin_lyas_fold"/>
</dbReference>
<dbReference type="InterPro" id="IPR011050">
    <property type="entry name" value="Pectin_lyase_fold/virulence"/>
</dbReference>
<dbReference type="InterPro" id="IPR024535">
    <property type="entry name" value="RHGA/B-epi-like_pectate_lyase"/>
</dbReference>
<dbReference type="PANTHER" id="PTHR31736">
    <property type="match status" value="1"/>
</dbReference>
<dbReference type="PANTHER" id="PTHR31736:SF19">
    <property type="entry name" value="PECTIN LYASE SUPERFAMILY PROTEIN-RELATED"/>
    <property type="match status" value="1"/>
</dbReference>
<dbReference type="Pfam" id="PF00295">
    <property type="entry name" value="Glyco_hydro_28"/>
    <property type="match status" value="1"/>
</dbReference>
<dbReference type="Pfam" id="PF12708">
    <property type="entry name" value="Pect-lyase_RHGA_epim"/>
    <property type="match status" value="1"/>
</dbReference>
<dbReference type="SUPFAM" id="SSF51126">
    <property type="entry name" value="Pectin lyase-like"/>
    <property type="match status" value="1"/>
</dbReference>
<reference key="1">
    <citation type="journal article" date="2015" name="Genome Announc.">
        <title>Genome sequence of Aspergillus flavus NRRL 3357, a strain that causes aflatoxin contamination of food and feed.</title>
        <authorList>
            <person name="Nierman W.C."/>
            <person name="Yu J."/>
            <person name="Fedorova-Abrams N.D."/>
            <person name="Losada L."/>
            <person name="Cleveland T.E."/>
            <person name="Bhatnagar D."/>
            <person name="Bennett J.W."/>
            <person name="Dean R."/>
            <person name="Payne G.A."/>
        </authorList>
    </citation>
    <scope>NUCLEOTIDE SEQUENCE [LARGE SCALE GENOMIC DNA]</scope>
    <source>
        <strain>ATCC 200026 / FGSC A1120 / IAM 13836 / NRRL 3357 / JCM 12722 / SRRC 167</strain>
    </source>
</reference>
<sequence length="447" mass="48195">MQVKLFYTLALWAPILVSAQLSGSVGPLVDFKTKAKNKTCDITDYGAVADGKTDVGPAILDAWGNCSTGGLIYVPPGTYSLATDLELKHGESTAFQLDGVLARGHEGSYQLILVRNCHDCEFFSGNSQGAVQGYGYEYLQDGNYGERLFRFQDVSDFSVHGFAAIDSPAYYLVFDTVSNGEIYNLLVRGIADLGMTDAFDIWGQNVWIHDIEVTNGDECVTVKSPASDFLIENIYCNLSGGTAIGSLGTGTNISNIHYRNLYMNQADACYLKTHNGDGIVKNIVWENVIVHGGPYPLAVNEAWGKDVGSTGVQVQNLTFRNWYGENTANSRPAIRIECDEDVPCYDITLDNVNLWTEDGDYVEWSCANAYGSGACLQEAKDTGDLATYTTAVTVTATPSYSATHMPGDFTTNPPSTAPFTIPPMPTSFYPGATPISTLLSLSGAGGL</sequence>